<evidence type="ECO:0000255" key="1">
    <source>
        <dbReference type="HAMAP-Rule" id="MF_00509"/>
    </source>
</evidence>
<evidence type="ECO:0000256" key="2">
    <source>
        <dbReference type="SAM" id="MobiDB-lite"/>
    </source>
</evidence>
<accession>Q9PAG1</accession>
<gene>
    <name evidence="1" type="primary">zipA</name>
    <name type="ordered locus">XF_2557</name>
</gene>
<reference key="1">
    <citation type="journal article" date="2000" name="Nature">
        <title>The genome sequence of the plant pathogen Xylella fastidiosa.</title>
        <authorList>
            <person name="Simpson A.J.G."/>
            <person name="Reinach F.C."/>
            <person name="Arruda P."/>
            <person name="Abreu F.A."/>
            <person name="Acencio M."/>
            <person name="Alvarenga R."/>
            <person name="Alves L.M.C."/>
            <person name="Araya J.E."/>
            <person name="Baia G.S."/>
            <person name="Baptista C.S."/>
            <person name="Barros M.H."/>
            <person name="Bonaccorsi E.D."/>
            <person name="Bordin S."/>
            <person name="Bove J.M."/>
            <person name="Briones M.R.S."/>
            <person name="Bueno M.R.P."/>
            <person name="Camargo A.A."/>
            <person name="Camargo L.E.A."/>
            <person name="Carraro D.M."/>
            <person name="Carrer H."/>
            <person name="Colauto N.B."/>
            <person name="Colombo C."/>
            <person name="Costa F.F."/>
            <person name="Costa M.C.R."/>
            <person name="Costa-Neto C.M."/>
            <person name="Coutinho L.L."/>
            <person name="Cristofani M."/>
            <person name="Dias-Neto E."/>
            <person name="Docena C."/>
            <person name="El-Dorry H."/>
            <person name="Facincani A.P."/>
            <person name="Ferreira A.J.S."/>
            <person name="Ferreira V.C.A."/>
            <person name="Ferro J.A."/>
            <person name="Fraga J.S."/>
            <person name="Franca S.C."/>
            <person name="Franco M.C."/>
            <person name="Frohme M."/>
            <person name="Furlan L.R."/>
            <person name="Garnier M."/>
            <person name="Goldman G.H."/>
            <person name="Goldman M.H.S."/>
            <person name="Gomes S.L."/>
            <person name="Gruber A."/>
            <person name="Ho P.L."/>
            <person name="Hoheisel J.D."/>
            <person name="Junqueira M.L."/>
            <person name="Kemper E.L."/>
            <person name="Kitajima J.P."/>
            <person name="Krieger J.E."/>
            <person name="Kuramae E.E."/>
            <person name="Laigret F."/>
            <person name="Lambais M.R."/>
            <person name="Leite L.C.C."/>
            <person name="Lemos E.G.M."/>
            <person name="Lemos M.V.F."/>
            <person name="Lopes S.A."/>
            <person name="Lopes C.R."/>
            <person name="Machado J.A."/>
            <person name="Machado M.A."/>
            <person name="Madeira A.M.B.N."/>
            <person name="Madeira H.M.F."/>
            <person name="Marino C.L."/>
            <person name="Marques M.V."/>
            <person name="Martins E.A.L."/>
            <person name="Martins E.M.F."/>
            <person name="Matsukuma A.Y."/>
            <person name="Menck C.F.M."/>
            <person name="Miracca E.C."/>
            <person name="Miyaki C.Y."/>
            <person name="Monteiro-Vitorello C.B."/>
            <person name="Moon D.H."/>
            <person name="Nagai M.A."/>
            <person name="Nascimento A.L.T.O."/>
            <person name="Netto L.E.S."/>
            <person name="Nhani A. Jr."/>
            <person name="Nobrega F.G."/>
            <person name="Nunes L.R."/>
            <person name="Oliveira M.A."/>
            <person name="de Oliveira M.C."/>
            <person name="de Oliveira R.C."/>
            <person name="Palmieri D.A."/>
            <person name="Paris A."/>
            <person name="Peixoto B.R."/>
            <person name="Pereira G.A.G."/>
            <person name="Pereira H.A. Jr."/>
            <person name="Pesquero J.B."/>
            <person name="Quaggio R.B."/>
            <person name="Roberto P.G."/>
            <person name="Rodrigues V."/>
            <person name="de Rosa A.J.M."/>
            <person name="de Rosa V.E. Jr."/>
            <person name="de Sa R.G."/>
            <person name="Santelli R.V."/>
            <person name="Sawasaki H.E."/>
            <person name="da Silva A.C.R."/>
            <person name="da Silva A.M."/>
            <person name="da Silva F.R."/>
            <person name="Silva W.A. Jr."/>
            <person name="da Silveira J.F."/>
            <person name="Silvestri M.L.Z."/>
            <person name="Siqueira W.J."/>
            <person name="de Souza A.A."/>
            <person name="de Souza A.P."/>
            <person name="Terenzi M.F."/>
            <person name="Truffi D."/>
            <person name="Tsai S.M."/>
            <person name="Tsuhako M.H."/>
            <person name="Vallada H."/>
            <person name="Van Sluys M.A."/>
            <person name="Verjovski-Almeida S."/>
            <person name="Vettore A.L."/>
            <person name="Zago M.A."/>
            <person name="Zatz M."/>
            <person name="Meidanis J."/>
            <person name="Setubal J.C."/>
        </authorList>
    </citation>
    <scope>NUCLEOTIDE SEQUENCE [LARGE SCALE GENOMIC DNA]</scope>
    <source>
        <strain>9a5c</strain>
    </source>
</reference>
<proteinExistence type="inferred from homology"/>
<sequence>MSDVTLLRIGIAIVGILFVAAVFFFSTPKTSAHRVRTKKEEPPRERREPMLSTEADNSPPQGVDEVPASVSQQQVNPEANKPGEVQLGKRPTNHFDKIILLFVAAKAEHTLRGEDIVVAAEKTGMIFGYMNVFHRLVEGYPEHGPIFSMASILKPGSFDMANIREMQIPAISFFLTLPAPMTALDAWEKMLPTVQRMAELLDGVVLDESRNALGRQRIAHIRDELRAYDRQQQVPPLIKNSRW</sequence>
<dbReference type="EMBL" id="AE003849">
    <property type="protein sequence ID" value="AAF85354.1"/>
    <property type="molecule type" value="Genomic_DNA"/>
</dbReference>
<dbReference type="PIR" id="H82542">
    <property type="entry name" value="H82542"/>
</dbReference>
<dbReference type="RefSeq" id="WP_010894978.1">
    <property type="nucleotide sequence ID" value="NC_002488.3"/>
</dbReference>
<dbReference type="SMR" id="Q9PAG1"/>
<dbReference type="STRING" id="160492.XF_2557"/>
<dbReference type="KEGG" id="xfa:XF_2557"/>
<dbReference type="PATRIC" id="fig|160492.11.peg.2719"/>
<dbReference type="eggNOG" id="COG3115">
    <property type="taxonomic scope" value="Bacteria"/>
</dbReference>
<dbReference type="HOGENOM" id="CLU_030174_2_1_6"/>
<dbReference type="Proteomes" id="UP000000812">
    <property type="component" value="Chromosome"/>
</dbReference>
<dbReference type="GO" id="GO:0032153">
    <property type="term" value="C:cell division site"/>
    <property type="evidence" value="ECO:0007669"/>
    <property type="project" value="UniProtKB-UniRule"/>
</dbReference>
<dbReference type="GO" id="GO:0005886">
    <property type="term" value="C:plasma membrane"/>
    <property type="evidence" value="ECO:0007669"/>
    <property type="project" value="UniProtKB-SubCell"/>
</dbReference>
<dbReference type="GO" id="GO:0000917">
    <property type="term" value="P:division septum assembly"/>
    <property type="evidence" value="ECO:0007669"/>
    <property type="project" value="TreeGrafter"/>
</dbReference>
<dbReference type="GO" id="GO:0043093">
    <property type="term" value="P:FtsZ-dependent cytokinesis"/>
    <property type="evidence" value="ECO:0007669"/>
    <property type="project" value="UniProtKB-UniRule"/>
</dbReference>
<dbReference type="Gene3D" id="3.30.1400.10">
    <property type="entry name" value="ZipA, C-terminal FtsZ-binding domain"/>
    <property type="match status" value="1"/>
</dbReference>
<dbReference type="HAMAP" id="MF_00509">
    <property type="entry name" value="ZipA"/>
    <property type="match status" value="1"/>
</dbReference>
<dbReference type="InterPro" id="IPR011919">
    <property type="entry name" value="Cell_div_ZipA"/>
</dbReference>
<dbReference type="InterPro" id="IPR007449">
    <property type="entry name" value="ZipA_FtsZ-bd_C"/>
</dbReference>
<dbReference type="InterPro" id="IPR036765">
    <property type="entry name" value="ZipA_FtsZ-bd_C_sf"/>
</dbReference>
<dbReference type="NCBIfam" id="TIGR02205">
    <property type="entry name" value="septum_zipA"/>
    <property type="match status" value="1"/>
</dbReference>
<dbReference type="PANTHER" id="PTHR38685">
    <property type="entry name" value="CELL DIVISION PROTEIN ZIPA"/>
    <property type="match status" value="1"/>
</dbReference>
<dbReference type="PANTHER" id="PTHR38685:SF1">
    <property type="entry name" value="CELL DIVISION PROTEIN ZIPA"/>
    <property type="match status" value="1"/>
</dbReference>
<dbReference type="Pfam" id="PF04354">
    <property type="entry name" value="ZipA_C"/>
    <property type="match status" value="1"/>
</dbReference>
<dbReference type="SMART" id="SM00771">
    <property type="entry name" value="ZipA_C"/>
    <property type="match status" value="1"/>
</dbReference>
<dbReference type="SUPFAM" id="SSF64383">
    <property type="entry name" value="Cell-division protein ZipA, C-terminal domain"/>
    <property type="match status" value="1"/>
</dbReference>
<keyword id="KW-0131">Cell cycle</keyword>
<keyword id="KW-0132">Cell division</keyword>
<keyword id="KW-0997">Cell inner membrane</keyword>
<keyword id="KW-1003">Cell membrane</keyword>
<keyword id="KW-0472">Membrane</keyword>
<keyword id="KW-0812">Transmembrane</keyword>
<keyword id="KW-1133">Transmembrane helix</keyword>
<organism>
    <name type="scientific">Xylella fastidiosa (strain 9a5c)</name>
    <dbReference type="NCBI Taxonomy" id="160492"/>
    <lineage>
        <taxon>Bacteria</taxon>
        <taxon>Pseudomonadati</taxon>
        <taxon>Pseudomonadota</taxon>
        <taxon>Gammaproteobacteria</taxon>
        <taxon>Lysobacterales</taxon>
        <taxon>Lysobacteraceae</taxon>
        <taxon>Xylella</taxon>
    </lineage>
</organism>
<name>ZIPA_XYLFA</name>
<feature type="chain" id="PRO_0000214544" description="Cell division protein ZipA">
    <location>
        <begin position="1"/>
        <end position="243"/>
    </location>
</feature>
<feature type="topological domain" description="Periplasmic" evidence="1">
    <location>
        <begin position="1"/>
        <end position="4"/>
    </location>
</feature>
<feature type="transmembrane region" description="Helical" evidence="1">
    <location>
        <begin position="5"/>
        <end position="25"/>
    </location>
</feature>
<feature type="topological domain" description="Cytoplasmic" evidence="1">
    <location>
        <begin position="26"/>
        <end position="243"/>
    </location>
</feature>
<feature type="region of interest" description="Disordered" evidence="2">
    <location>
        <begin position="32"/>
        <end position="89"/>
    </location>
</feature>
<feature type="compositionally biased region" description="Basic and acidic residues" evidence="2">
    <location>
        <begin position="38"/>
        <end position="49"/>
    </location>
</feature>
<protein>
    <recommendedName>
        <fullName evidence="1">Cell division protein ZipA</fullName>
    </recommendedName>
</protein>
<comment type="function">
    <text evidence="1">Essential cell division protein that stabilizes the FtsZ protofilaments by cross-linking them and that serves as a cytoplasmic membrane anchor for the Z ring. Also required for the recruitment to the septal ring of downstream cell division proteins.</text>
</comment>
<comment type="subunit">
    <text evidence="1">Interacts with FtsZ via their C-terminal domains.</text>
</comment>
<comment type="subcellular location">
    <subcellularLocation>
        <location evidence="1">Cell inner membrane</location>
        <topology evidence="1">Single-pass type I membrane protein</topology>
    </subcellularLocation>
    <text evidence="1">Localizes to the Z ring in an FtsZ-dependent manner.</text>
</comment>
<comment type="similarity">
    <text evidence="1">Belongs to the ZipA family.</text>
</comment>